<proteinExistence type="evidence at protein level"/>
<organism>
    <name type="scientific">Physcomitrium patens</name>
    <name type="common">Spreading-leaved earth moss</name>
    <name type="synonym">Physcomitrella patens</name>
    <dbReference type="NCBI Taxonomy" id="3218"/>
    <lineage>
        <taxon>Eukaryota</taxon>
        <taxon>Viridiplantae</taxon>
        <taxon>Streptophyta</taxon>
        <taxon>Embryophyta</taxon>
        <taxon>Bryophyta</taxon>
        <taxon>Bryophytina</taxon>
        <taxon>Bryopsida</taxon>
        <taxon>Funariidae</taxon>
        <taxon>Funariales</taxon>
        <taxon>Funariaceae</taxon>
        <taxon>Physcomitrium</taxon>
    </lineage>
</organism>
<comment type="function">
    <text evidence="4 5">Bifunctional copalyl diphosphate/kaurene synthase involved in the biosynthesis of labdane-related diterpenoids (LRDs) natural products such as ent-beyerene, an antimicrobial compound (PubMed:17064690, PubMed:26248039). Supports the conversion of geranylgeranyl diphosphate (GGPP) to ent-copalyl diphosphate (ent-CDP) (PubMed:17064690). Also catalyzes the subsequent cyclization of ent-CDP into many diterpenes, including ent-kaur-16-ene as the major product, and ent-beyerene, ent-sandaracopimaradiene, ent-kaur-15-ene (ent-isokaurene) and 16-hydroxy-ent-kaurene (ent-16-alpha-hydroxy-kaurene) as minor products (PubMed:17064690, PubMed:26248039).</text>
</comment>
<comment type="catalytic activity">
    <reaction evidence="4">
        <text>(2E,6E,10E)-geranylgeranyl diphosphate = ent-copalyl diphosphate</text>
        <dbReference type="Rhea" id="RHEA:14841"/>
        <dbReference type="ChEBI" id="CHEBI:58553"/>
        <dbReference type="ChEBI" id="CHEBI:58756"/>
        <dbReference type="EC" id="5.5.1.13"/>
    </reaction>
    <physiologicalReaction direction="left-to-right" evidence="4">
        <dbReference type="Rhea" id="RHEA:14842"/>
    </physiologicalReaction>
</comment>
<comment type="catalytic activity">
    <reaction evidence="4 5">
        <text>ent-copalyl diphosphate = ent-kaur-16-ene + diphosphate</text>
        <dbReference type="Rhea" id="RHEA:22220"/>
        <dbReference type="ChEBI" id="CHEBI:15415"/>
        <dbReference type="ChEBI" id="CHEBI:33019"/>
        <dbReference type="ChEBI" id="CHEBI:58553"/>
        <dbReference type="EC" id="4.2.3.19"/>
    </reaction>
    <physiologicalReaction direction="left-to-right" evidence="4 5">
        <dbReference type="Rhea" id="RHEA:22221"/>
    </physiologicalReaction>
</comment>
<comment type="catalytic activity">
    <reaction evidence="5">
        <text>ent-copalyl diphosphate = ent-beyerene + diphosphate</text>
        <dbReference type="Rhea" id="RHEA:79011"/>
        <dbReference type="ChEBI" id="CHEBI:33019"/>
        <dbReference type="ChEBI" id="CHEBI:58553"/>
        <dbReference type="ChEBI" id="CHEBI:229601"/>
        <dbReference type="EC" id="4.2.3.229"/>
    </reaction>
    <physiologicalReaction direction="left-to-right" evidence="5">
        <dbReference type="Rhea" id="RHEA:79012"/>
    </physiologicalReaction>
</comment>
<comment type="catalytic activity">
    <reaction evidence="5">
        <text>ent-copalyl diphosphate = ent-sandaracopimara-8(14),15-diene + diphosphate</text>
        <dbReference type="Rhea" id="RHEA:25536"/>
        <dbReference type="ChEBI" id="CHEBI:33019"/>
        <dbReference type="ChEBI" id="CHEBI:50061"/>
        <dbReference type="ChEBI" id="CHEBI:58553"/>
        <dbReference type="EC" id="4.2.3.29"/>
    </reaction>
    <physiologicalReaction direction="left-to-right" evidence="5">
        <dbReference type="Rhea" id="RHEA:25537"/>
    </physiologicalReaction>
</comment>
<comment type="catalytic activity">
    <reaction evidence="5">
        <text>ent-copalyl diphosphate = ent-isokaurene + diphosphate</text>
        <dbReference type="Rhea" id="RHEA:25759"/>
        <dbReference type="ChEBI" id="CHEBI:33019"/>
        <dbReference type="ChEBI" id="CHEBI:50783"/>
        <dbReference type="ChEBI" id="CHEBI:58553"/>
        <dbReference type="EC" id="4.2.3.103"/>
    </reaction>
    <physiologicalReaction direction="left-to-right" evidence="5">
        <dbReference type="Rhea" id="RHEA:25760"/>
    </physiologicalReaction>
</comment>
<comment type="catalytic activity">
    <reaction evidence="4 5">
        <text>ent-copalyl diphosphate + H2O = 16alpha-hydroxy-ent-kaurene + diphosphate</text>
        <dbReference type="Rhea" id="RHEA:81231"/>
        <dbReference type="ChEBI" id="CHEBI:15377"/>
        <dbReference type="ChEBI" id="CHEBI:33019"/>
        <dbReference type="ChEBI" id="CHEBI:58553"/>
        <dbReference type="ChEBI" id="CHEBI:231830"/>
    </reaction>
    <physiologicalReaction direction="left-to-right" evidence="4 5">
        <dbReference type="Rhea" id="RHEA:81232"/>
    </physiologicalReaction>
</comment>
<comment type="cofactor">
    <cofactor evidence="2">
        <name>Mg(2+)</name>
        <dbReference type="ChEBI" id="CHEBI:18420"/>
    </cofactor>
    <text evidence="8">Binds 4 Mg(2+) ions per subunit.</text>
</comment>
<comment type="pathway">
    <text evidence="5">Secondary metabolite biosynthesis; terpenoid biosynthesis.</text>
</comment>
<comment type="subcellular location">
    <subcellularLocation>
        <location evidence="3">Plastid</location>
        <location evidence="3">Chloroplast</location>
    </subcellularLocation>
</comment>
<comment type="domain">
    <text evidence="4">The Asp-Asp-Xaa-Xaa-Asp/Glu (DDXXD/E) motif is important for the ent-kaurene synthase (KS) catalytic activity, presumably through binding to Mg(2+).</text>
</comment>
<comment type="domain">
    <text evidence="4">The Asp-Xaa-Asp-Asp-Thr-Ala (DXDDTA) motif is important for the ent-copalyl diphosphate synthase (CPS) catalytic activity, presumably through binding to Mg(2+).</text>
</comment>
<comment type="disruption phenotype">
    <text evidence="5">Lost ability to convert geranylgeranyl diphosphate (GGPP) into diterpenoids.</text>
</comment>
<comment type="similarity">
    <text evidence="8">Belongs to the terpene synthase family.</text>
</comment>
<evidence type="ECO:0000250" key="1">
    <source>
        <dbReference type="UniProtKB" id="C7BKP9"/>
    </source>
</evidence>
<evidence type="ECO:0000250" key="2">
    <source>
        <dbReference type="UniProtKB" id="Q40577"/>
    </source>
</evidence>
<evidence type="ECO:0000255" key="3"/>
<evidence type="ECO:0000269" key="4">
    <source>
    </source>
</evidence>
<evidence type="ECO:0000269" key="5">
    <source>
    </source>
</evidence>
<evidence type="ECO:0000303" key="6">
    <source>
    </source>
</evidence>
<evidence type="ECO:0000303" key="7">
    <source>
    </source>
</evidence>
<evidence type="ECO:0000305" key="8"/>
<evidence type="ECO:0000305" key="9">
    <source>
    </source>
</evidence>
<evidence type="ECO:0000312" key="10">
    <source>
        <dbReference type="EMBL" id="PNR50587.1"/>
    </source>
</evidence>
<feature type="transit peptide" description="Chloroplast" evidence="3">
    <location>
        <begin position="1"/>
        <end position="41"/>
    </location>
</feature>
<feature type="chain" id="PRO_0000460914" description="Ent-kaurene synthase CPS/KS, chloroplastic">
    <location>
        <begin position="42"/>
        <end position="881"/>
    </location>
</feature>
<feature type="short sequence motif" description="DXDDTA motif" evidence="9">
    <location>
        <begin position="417"/>
        <end position="422"/>
    </location>
</feature>
<feature type="short sequence motif" description="DDXXD motif" evidence="9">
    <location>
        <begin position="635"/>
        <end position="639"/>
    </location>
</feature>
<feature type="binding site" evidence="1">
    <location>
        <position position="417"/>
    </location>
    <ligand>
        <name>Mg(2+)</name>
        <dbReference type="ChEBI" id="CHEBI:18420"/>
        <label>1</label>
    </ligand>
</feature>
<feature type="binding site" evidence="1">
    <location>
        <position position="419"/>
    </location>
    <ligand>
        <name>Mg(2+)</name>
        <dbReference type="ChEBI" id="CHEBI:18420"/>
        <label>1</label>
    </ligand>
</feature>
<feature type="binding site" evidence="2">
    <location>
        <position position="635"/>
    </location>
    <ligand>
        <name>Mg(2+)</name>
        <dbReference type="ChEBI" id="CHEBI:18420"/>
        <label>2</label>
    </ligand>
</feature>
<feature type="binding site" evidence="2">
    <location>
        <position position="635"/>
    </location>
    <ligand>
        <name>Mg(2+)</name>
        <dbReference type="ChEBI" id="CHEBI:18420"/>
        <label>3</label>
    </ligand>
</feature>
<feature type="binding site" evidence="2">
    <location>
        <position position="639"/>
    </location>
    <ligand>
        <name>Mg(2+)</name>
        <dbReference type="ChEBI" id="CHEBI:18420"/>
        <label>2</label>
    </ligand>
</feature>
<feature type="binding site" evidence="2">
    <location>
        <position position="639"/>
    </location>
    <ligand>
        <name>Mg(2+)</name>
        <dbReference type="ChEBI" id="CHEBI:18420"/>
        <label>3</label>
    </ligand>
</feature>
<feature type="binding site" evidence="2">
    <location>
        <position position="778"/>
    </location>
    <ligand>
        <name>Mg(2+)</name>
        <dbReference type="ChEBI" id="CHEBI:18420"/>
        <label>4</label>
    </ligand>
</feature>
<feature type="binding site" evidence="2">
    <location>
        <position position="779"/>
    </location>
    <ligand>
        <name>Mg(2+)</name>
        <dbReference type="ChEBI" id="CHEBI:18420"/>
        <label>4</label>
    </ligand>
</feature>
<feature type="binding site" evidence="2">
    <location>
        <position position="786"/>
    </location>
    <ligand>
        <name>Mg(2+)</name>
        <dbReference type="ChEBI" id="CHEBI:18420"/>
        <label>4</label>
    </ligand>
</feature>
<feature type="mutagenesis site" description="In cps; no production of copalyl diphosphate (CPD) from geranylgeranyl diphosphate (GGPP). Lost ability to convert GGPP into ent-kaurene and 16-hydroxy-ent-kaurene; when associated with 635-A-A-636." evidence="4">
    <original>DVD</original>
    <variation>AVA</variation>
    <location>
        <begin position="417"/>
        <end position="419"/>
    </location>
</feature>
<feature type="mutagenesis site" description="In ks; accumulation of copalyl diphosphate (CPD) from geranylgeranyl diphosphate (GGPP). Lost ability to convert GGPP into ent-kaurene and 16-hydroxy-ent-kaurene; when associated with 417-A--A-419." evidence="4">
    <original>DD</original>
    <variation>AA</variation>
    <location>
        <begin position="635"/>
        <end position="636"/>
    </location>
</feature>
<dbReference type="EC" id="4.2.3.19" evidence="4 5"/>
<dbReference type="EC" id="4.2.3.-" evidence="4 5"/>
<dbReference type="EC" id="4.2.3.229" evidence="5"/>
<dbReference type="EC" id="5.5.1.13" evidence="4"/>
<dbReference type="EC" id="4.2.3.103" evidence="5"/>
<dbReference type="EC" id="4.2.3.29" evidence="5"/>
<dbReference type="EMBL" id="AB302933">
    <property type="protein sequence ID" value="BAF61135.1"/>
    <property type="molecule type" value="mRNA"/>
</dbReference>
<dbReference type="EMBL" id="ABEU02000007">
    <property type="protein sequence ID" value="PNR50587.1"/>
    <property type="molecule type" value="Genomic_DNA"/>
</dbReference>
<dbReference type="SMR" id="A5A8G0"/>
<dbReference type="FunCoup" id="A5A8G0">
    <property type="interactions" value="32"/>
</dbReference>
<dbReference type="STRING" id="3218.A5A8G0"/>
<dbReference type="PaxDb" id="3218-PP1S130_5V6.1"/>
<dbReference type="EnsemblPlants" id="Pp3c7_1880V3.1">
    <property type="protein sequence ID" value="Pp3c7_1880V3.1"/>
    <property type="gene ID" value="Pp3c7_1880"/>
</dbReference>
<dbReference type="EnsemblPlants" id="Pp3c7_1880V3.2">
    <property type="protein sequence ID" value="Pp3c7_1880V3.2"/>
    <property type="gene ID" value="Pp3c7_1880"/>
</dbReference>
<dbReference type="EnsemblPlants" id="Pp3c7_1880V3.3">
    <property type="protein sequence ID" value="Pp3c7_1880V3.3"/>
    <property type="gene ID" value="Pp3c7_1880"/>
</dbReference>
<dbReference type="EnsemblPlants" id="Pp3c7_1880V3.4">
    <property type="protein sequence ID" value="Pp3c7_1880V3.4"/>
    <property type="gene ID" value="Pp3c7_1880"/>
</dbReference>
<dbReference type="EnsemblPlants" id="Pp3c7_1880V3.5">
    <property type="protein sequence ID" value="Pp3c7_1880V3.5"/>
    <property type="gene ID" value="Pp3c7_1880"/>
</dbReference>
<dbReference type="EnsemblPlants" id="Pp3c7_1880V3.6">
    <property type="protein sequence ID" value="Pp3c7_1880V3.6"/>
    <property type="gene ID" value="Pp3c7_1880"/>
</dbReference>
<dbReference type="EnsemblPlants" id="Pp3c7_1880V3.7">
    <property type="protein sequence ID" value="Pp3c7_1880V3.7"/>
    <property type="gene ID" value="Pp3c7_1880"/>
</dbReference>
<dbReference type="Gramene" id="Pp3c7_1880V3.1">
    <property type="protein sequence ID" value="Pp3c7_1880V3.1"/>
    <property type="gene ID" value="Pp3c7_1880"/>
</dbReference>
<dbReference type="Gramene" id="Pp3c7_1880V3.2">
    <property type="protein sequence ID" value="Pp3c7_1880V3.2"/>
    <property type="gene ID" value="Pp3c7_1880"/>
</dbReference>
<dbReference type="Gramene" id="Pp3c7_1880V3.3">
    <property type="protein sequence ID" value="Pp3c7_1880V3.3"/>
    <property type="gene ID" value="Pp3c7_1880"/>
</dbReference>
<dbReference type="Gramene" id="Pp3c7_1880V3.4">
    <property type="protein sequence ID" value="Pp3c7_1880V3.4"/>
    <property type="gene ID" value="Pp3c7_1880"/>
</dbReference>
<dbReference type="Gramene" id="Pp3c7_1880V3.5">
    <property type="protein sequence ID" value="Pp3c7_1880V3.5"/>
    <property type="gene ID" value="Pp3c7_1880"/>
</dbReference>
<dbReference type="Gramene" id="Pp3c7_1880V3.6">
    <property type="protein sequence ID" value="Pp3c7_1880V3.6"/>
    <property type="gene ID" value="Pp3c7_1880"/>
</dbReference>
<dbReference type="Gramene" id="Pp3c7_1880V3.7">
    <property type="protein sequence ID" value="Pp3c7_1880V3.7"/>
    <property type="gene ID" value="Pp3c7_1880"/>
</dbReference>
<dbReference type="HOGENOM" id="CLU_003125_2_0_1"/>
<dbReference type="InParanoid" id="A5A8G0"/>
<dbReference type="OMA" id="DEYMTNG"/>
<dbReference type="OrthoDB" id="2343925at2759"/>
<dbReference type="BioCyc" id="MetaCyc:MONOMER-15965"/>
<dbReference type="BRENDA" id="4.2.3.19">
    <property type="organism ID" value="4802"/>
</dbReference>
<dbReference type="UniPathway" id="UPA00213"/>
<dbReference type="Proteomes" id="UP000006727">
    <property type="component" value="Chromosome 7"/>
</dbReference>
<dbReference type="GO" id="GO:0009507">
    <property type="term" value="C:chloroplast"/>
    <property type="evidence" value="ECO:0007669"/>
    <property type="project" value="UniProtKB-SubCell"/>
</dbReference>
<dbReference type="GO" id="GO:0009905">
    <property type="term" value="F:ent-copalyl diphosphate synthase activity"/>
    <property type="evidence" value="ECO:0000314"/>
    <property type="project" value="UniProtKB"/>
</dbReference>
<dbReference type="GO" id="GO:0034281">
    <property type="term" value="F:ent-isokaurene synthase activity"/>
    <property type="evidence" value="ECO:0000314"/>
    <property type="project" value="UniProtKB"/>
</dbReference>
<dbReference type="GO" id="GO:0009899">
    <property type="term" value="F:ent-kaurene synthase activity"/>
    <property type="evidence" value="ECO:0000314"/>
    <property type="project" value="UniProtKB"/>
</dbReference>
<dbReference type="GO" id="GO:0034280">
    <property type="term" value="F:ent-sandaracopimaradiene synthase activity"/>
    <property type="evidence" value="ECO:0000314"/>
    <property type="project" value="UniProtKB"/>
</dbReference>
<dbReference type="GO" id="GO:0000287">
    <property type="term" value="F:magnesium ion binding"/>
    <property type="evidence" value="ECO:0000318"/>
    <property type="project" value="GO_Central"/>
</dbReference>
<dbReference type="GO" id="GO:0010333">
    <property type="term" value="F:terpene synthase activity"/>
    <property type="evidence" value="ECO:0000314"/>
    <property type="project" value="UniProtKB"/>
</dbReference>
<dbReference type="GO" id="GO:0016102">
    <property type="term" value="P:diterpenoid biosynthetic process"/>
    <property type="evidence" value="ECO:0000314"/>
    <property type="project" value="UniProtKB"/>
</dbReference>
<dbReference type="GO" id="GO:0033332">
    <property type="term" value="P:ent-kaurene biosynthetic process"/>
    <property type="evidence" value="ECO:0000314"/>
    <property type="project" value="UniProtKB"/>
</dbReference>
<dbReference type="CDD" id="cd00684">
    <property type="entry name" value="Terpene_cyclase_plant_C1"/>
    <property type="match status" value="1"/>
</dbReference>
<dbReference type="FunFam" id="1.50.10.130:FF:000002">
    <property type="entry name" value="Ent-copalyl diphosphate synthase, chloroplastic"/>
    <property type="match status" value="1"/>
</dbReference>
<dbReference type="FunFam" id="1.10.600.10:FF:000005">
    <property type="entry name" value="Ent-kaur-16-ene synthase, chloroplastic"/>
    <property type="match status" value="1"/>
</dbReference>
<dbReference type="Gene3D" id="1.50.10.160">
    <property type="match status" value="1"/>
</dbReference>
<dbReference type="Gene3D" id="1.10.600.10">
    <property type="entry name" value="Farnesyl Diphosphate Synthase"/>
    <property type="match status" value="1"/>
</dbReference>
<dbReference type="Gene3D" id="1.50.10.130">
    <property type="entry name" value="Terpene synthase, N-terminal domain"/>
    <property type="match status" value="1"/>
</dbReference>
<dbReference type="InterPro" id="IPR008949">
    <property type="entry name" value="Isoprenoid_synthase_dom_sf"/>
</dbReference>
<dbReference type="InterPro" id="IPR034741">
    <property type="entry name" value="Terpene_cyclase-like_1_C"/>
</dbReference>
<dbReference type="InterPro" id="IPR044814">
    <property type="entry name" value="Terpene_cyclase_plant_C1"/>
</dbReference>
<dbReference type="InterPro" id="IPR001906">
    <property type="entry name" value="Terpene_synth_N"/>
</dbReference>
<dbReference type="InterPro" id="IPR036965">
    <property type="entry name" value="Terpene_synth_N_sf"/>
</dbReference>
<dbReference type="InterPro" id="IPR050148">
    <property type="entry name" value="Terpene_synthase-like"/>
</dbReference>
<dbReference type="InterPro" id="IPR005630">
    <property type="entry name" value="Terpene_synthase_metal-bd"/>
</dbReference>
<dbReference type="InterPro" id="IPR008930">
    <property type="entry name" value="Terpenoid_cyclase/PrenylTrfase"/>
</dbReference>
<dbReference type="PANTHER" id="PTHR31739">
    <property type="entry name" value="ENT-COPALYL DIPHOSPHATE SYNTHASE, CHLOROPLASTIC"/>
    <property type="match status" value="1"/>
</dbReference>
<dbReference type="PANTHER" id="PTHR31739:SF4">
    <property type="entry name" value="ENT-COPALYL DIPHOSPHATE SYNTHASE, CHLOROPLASTIC"/>
    <property type="match status" value="1"/>
</dbReference>
<dbReference type="Pfam" id="PF01397">
    <property type="entry name" value="Terpene_synth"/>
    <property type="match status" value="1"/>
</dbReference>
<dbReference type="Pfam" id="PF03936">
    <property type="entry name" value="Terpene_synth_C"/>
    <property type="match status" value="1"/>
</dbReference>
<dbReference type="SFLD" id="SFLDS00005">
    <property type="entry name" value="Isoprenoid_Synthase_Type_I"/>
    <property type="match status" value="1"/>
</dbReference>
<dbReference type="SFLD" id="SFLDG01019">
    <property type="entry name" value="Terpene_Cyclase_Like_1_C_Termi"/>
    <property type="match status" value="1"/>
</dbReference>
<dbReference type="SFLD" id="SFLDG01014">
    <property type="entry name" value="Terpene_Cyclase_Like_1_N-term"/>
    <property type="match status" value="1"/>
</dbReference>
<dbReference type="SFLD" id="SFLDG01605">
    <property type="entry name" value="Terpene_Cyclase_Like_1_N-term"/>
    <property type="match status" value="1"/>
</dbReference>
<dbReference type="SUPFAM" id="SSF48239">
    <property type="entry name" value="Terpenoid cyclases/Protein prenyltransferases"/>
    <property type="match status" value="2"/>
</dbReference>
<dbReference type="SUPFAM" id="SSF48576">
    <property type="entry name" value="Terpenoid synthases"/>
    <property type="match status" value="1"/>
</dbReference>
<reference key="1">
    <citation type="journal article" date="2006" name="FEBS Lett.">
        <title>Identification and functional analysis of bifunctional ent-kaurene synthase from the moss Physcomitrella patens.</title>
        <authorList>
            <person name="Hayashi K."/>
            <person name="Kawaide H."/>
            <person name="Notomi M."/>
            <person name="Sakigi Y."/>
            <person name="Matsuo A."/>
            <person name="Nozaki H."/>
        </authorList>
    </citation>
    <scope>NUCLEOTIDE SEQUENCE [MRNA]</scope>
    <scope>FUNCTION</scope>
    <scope>MUTAGENESIS OF 417-ASP--ASP-419 AND 635-ASP-ASP-636</scope>
    <scope>CATALYTIC ACTIVITY</scope>
    <scope>PATHWAY</scope>
</reference>
<reference key="2">
    <citation type="journal article" date="2008" name="Science">
        <title>The Physcomitrella genome reveals evolutionary insights into the conquest of land by plants.</title>
        <authorList>
            <person name="Rensing S.A."/>
            <person name="Lang D."/>
            <person name="Zimmer A.D."/>
            <person name="Terry A."/>
            <person name="Salamov A."/>
            <person name="Shapiro H."/>
            <person name="Nishiyama T."/>
            <person name="Perroud P.-F."/>
            <person name="Lindquist E.A."/>
            <person name="Kamisugi Y."/>
            <person name="Tanahashi T."/>
            <person name="Sakakibara K."/>
            <person name="Fujita T."/>
            <person name="Oishi K."/>
            <person name="Shin-I T."/>
            <person name="Kuroki Y."/>
            <person name="Toyoda A."/>
            <person name="Suzuki Y."/>
            <person name="Hashimoto S.-I."/>
            <person name="Yamaguchi K."/>
            <person name="Sugano S."/>
            <person name="Kohara Y."/>
            <person name="Fujiyama A."/>
            <person name="Anterola A."/>
            <person name="Aoki S."/>
            <person name="Ashton N."/>
            <person name="Barbazuk W.B."/>
            <person name="Barker E."/>
            <person name="Bennetzen J.L."/>
            <person name="Blankenship R."/>
            <person name="Cho S.H."/>
            <person name="Dutcher S.K."/>
            <person name="Estelle M."/>
            <person name="Fawcett J.A."/>
            <person name="Gundlach H."/>
            <person name="Hanada K."/>
            <person name="Heyl A."/>
            <person name="Hicks K.A."/>
            <person name="Hughes J."/>
            <person name="Lohr M."/>
            <person name="Mayer K."/>
            <person name="Melkozernov A."/>
            <person name="Murata T."/>
            <person name="Nelson D.R."/>
            <person name="Pils B."/>
            <person name="Prigge M."/>
            <person name="Reiss B."/>
            <person name="Renner T."/>
            <person name="Rombauts S."/>
            <person name="Rushton P.J."/>
            <person name="Sanderfoot A."/>
            <person name="Schween G."/>
            <person name="Shiu S.-H."/>
            <person name="Stueber K."/>
            <person name="Theodoulou F.L."/>
            <person name="Tu H."/>
            <person name="Van de Peer Y."/>
            <person name="Verrier P.J."/>
            <person name="Waters E."/>
            <person name="Wood A."/>
            <person name="Yang L."/>
            <person name="Cove D."/>
            <person name="Cuming A.C."/>
            <person name="Hasebe M."/>
            <person name="Lucas S."/>
            <person name="Mishler B.D."/>
            <person name="Reski R."/>
            <person name="Grigoriev I.V."/>
            <person name="Quatrano R.S."/>
            <person name="Boore J.L."/>
        </authorList>
    </citation>
    <scope>NUCLEOTIDE SEQUENCE [LARGE SCALE GENOMIC DNA]</scope>
    <source>
        <strain>cv. Gransden 2004</strain>
    </source>
</reference>
<reference key="3">
    <citation type="journal article" date="2018" name="Plant J.">
        <title>The Physcomitrella patens chromosome-scale assembly reveals moss genome structure and evolution.</title>
        <authorList>
            <person name="Lang D."/>
            <person name="Ullrich K.K."/>
            <person name="Murat F."/>
            <person name="Fuchs J."/>
            <person name="Jenkins J."/>
            <person name="Haas F.B."/>
            <person name="Piednoel M."/>
            <person name="Gundlach H."/>
            <person name="Van Bel M."/>
            <person name="Meyberg R."/>
            <person name="Vives C."/>
            <person name="Morata J."/>
            <person name="Symeonidi A."/>
            <person name="Hiss M."/>
            <person name="Muchero W."/>
            <person name="Kamisugi Y."/>
            <person name="Saleh O."/>
            <person name="Blanc G."/>
            <person name="Decker E.L."/>
            <person name="van Gessel N."/>
            <person name="Grimwood J."/>
            <person name="Hayes R.D."/>
            <person name="Graham S.W."/>
            <person name="Gunter L.E."/>
            <person name="McDaniel S.F."/>
            <person name="Hoernstein S.N.W."/>
            <person name="Larsson A."/>
            <person name="Li F.W."/>
            <person name="Perroud P.F."/>
            <person name="Phillips J."/>
            <person name="Ranjan P."/>
            <person name="Rokshar D.S."/>
            <person name="Rothfels C.J."/>
            <person name="Schneider L."/>
            <person name="Shu S."/>
            <person name="Stevenson D.W."/>
            <person name="Thummler F."/>
            <person name="Tillich M."/>
            <person name="Villarreal Aguilar J.C."/>
            <person name="Widiez T."/>
            <person name="Wong G.K."/>
            <person name="Wymore A."/>
            <person name="Zhang Y."/>
            <person name="Zimmer A.D."/>
            <person name="Quatrano R.S."/>
            <person name="Mayer K.F.X."/>
            <person name="Goodstein D."/>
            <person name="Casacuberta J.M."/>
            <person name="Vandepoele K."/>
            <person name="Reski R."/>
            <person name="Cuming A.C."/>
            <person name="Tuskan G.A."/>
            <person name="Maumus F."/>
            <person name="Salse J."/>
            <person name="Schmutz J."/>
            <person name="Rensing S.A."/>
        </authorList>
    </citation>
    <scope>NUCLEOTIDE SEQUENCE [LARGE SCALE GENOMIC DNA]</scope>
    <scope>GENOME REANNOTATION</scope>
    <source>
        <strain>cv. Gransden 2004</strain>
    </source>
</reference>
<reference key="4">
    <citation type="journal article" date="2015" name="Plant Physiol. Biochem.">
        <title>Additional diterpenes from Physcomitrella patens synthesized by copalyl diphosphate/kaurene synthase (PpCPS/KS).</title>
        <authorList>
            <person name="Zhan X."/>
            <person name="Bach S.S."/>
            <person name="Hansen N.L."/>
            <person name="Lunde C."/>
            <person name="Simonsen H.T."/>
        </authorList>
    </citation>
    <scope>FUNCTION</scope>
    <scope>DISRUPTION PHENOTYPE</scope>
    <scope>CATALYTIC ACTIVITY</scope>
    <scope>PATHWAY</scope>
    <source>
        <strain>cv. Gransden 2004</strain>
    </source>
</reference>
<protein>
    <recommendedName>
        <fullName evidence="6">Ent-kaurene synthase CPS/KS, chloroplastic</fullName>
        <shortName evidence="6">PpKS</shortName>
        <ecNumber evidence="4 5">4.2.3.19</ecNumber>
    </recommendedName>
    <alternativeName>
        <fullName evidence="7">16-hydroxy-ent-kaurene synthase CPS/KS</fullName>
        <ecNumber evidence="4 5">4.2.3.-</ecNumber>
    </alternativeName>
    <alternativeName>
        <fullName evidence="6">Bifunctional copalyl diphosphate/kaurene synthase</fullName>
        <shortName evidence="6">PpCPS/KS</shortName>
    </alternativeName>
    <alternativeName>
        <fullName evidence="7">Ent-beyerene synthase CPS/KS</fullName>
        <ecNumber evidence="5">4.2.3.229</ecNumber>
    </alternativeName>
    <alternativeName>
        <fullName evidence="6">Ent-copalyl diphosphate synthase CPS/KS</fullName>
        <shortName evidence="6">PpCPS</shortName>
        <ecNumber evidence="4">5.5.1.13</ecNumber>
    </alternativeName>
    <alternativeName>
        <fullName evidence="7">Ent-isokaurene synthase CPS/KS</fullName>
        <ecNumber evidence="5">4.2.3.103</ecNumber>
    </alternativeName>
    <alternativeName>
        <fullName evidence="7">Ent-sandaracopimaradiene synthase CPS/KS</fullName>
        <ecNumber evidence="5">4.2.3.29</ecNumber>
    </alternativeName>
</protein>
<sequence length="881" mass="101237">MASSTLIQNRSCGVTSSMSSFQIFRGQPLRFPGTRTPAAVQCLKKRRCLRPTESVLESSPGSGSYRIVTGPSGINPSSNGHLQEGSLTHRLPIPMEKSIDNFQSTLYVSDIWSETLQRTECLLQVTENVQMNEWIEEIRMYFRNMTLGEISMSPYDTAWVARVPALDGSHGPQFHRSLQWIIDNQLPDGDWGEPSLFLGYDRVCNTLACVIALKTWGVGAQNVERGIQFLQSNIYKMEEDDANHMPIGFEIVFPAMMEDAKALGLDLPYDATILQQISAEREKKMKKIPMAMVYKYPTTLLHSLEGLHREVDWNKLLQLQSENGSFLYSPASTACALMYTKDVKCFDYLNQLLIKFDHACPNVYPVDLFERLWMVDRLQRLGISRYFEREIRDCLQYVYRYWKDCGIGWASNSSVQDVDDTAMAFRLLRTHGFDVKEDCFRQFFKDGEFFCFAGQSSQAVTGMFNLSRASQTLFPGESLLKKARTFSRNFLRTKHENNECFDKWIITKDLAGEVEYNLTFPWYASLPRLEHRTYLDQYGIDDIWIGKSLYKMPAVTNEVFLKLAKADFNMCQALHKKELEQVIKWNASCQFRDLEFARQKSVECYFAGAATMFEPEMVQARLVWARCCVLTTVLDDYFDHGTPVEELRVFVQAVRTWNPELINGLPEQAKILFMGLYKTVNTIAEEAFMAQKRDVHHHLKHYWDKLITSALKEAEWAESGYVPTFDEYMEVAEISVALEPIVCSTLFFAGHRLDEDVLDSYDYHLVMHLVNRVGRILNDIQGMKREASQGKISSVQIYMEEHPSVPSEAMAIAHLQELVDNSMQQLTYEVLRFTAVPKSCKRIHLNMAKIMHAFYKDTDGFSSLTAMTGFVKKVLFEPVPE</sequence>
<keyword id="KW-0150">Chloroplast</keyword>
<keyword id="KW-0413">Isomerase</keyword>
<keyword id="KW-0456">Lyase</keyword>
<keyword id="KW-0460">Magnesium</keyword>
<keyword id="KW-0479">Metal-binding</keyword>
<keyword id="KW-0934">Plastid</keyword>
<keyword id="KW-1185">Reference proteome</keyword>
<keyword id="KW-0809">Transit peptide</keyword>
<gene>
    <name evidence="6" type="primary">CPS/KS</name>
    <name evidence="6" type="ordered locus">Pp1s130_5V6.1</name>
    <name evidence="10" type="ORF">PHYPA_009773</name>
</gene>
<accession>A5A8G0</accession>
<name>CPSKS_PHYPA</name>